<protein>
    <recommendedName>
        <fullName evidence="1">4-hydroxy-tetrahydrodipicolinate synthase</fullName>
        <shortName evidence="1">HTPA synthase</shortName>
        <ecNumber evidence="1">4.3.3.7</ecNumber>
    </recommendedName>
</protein>
<reference key="1">
    <citation type="journal article" date="2002" name="Lancet">
        <title>Genome and virulence determinants of high virulence community-acquired MRSA.</title>
        <authorList>
            <person name="Baba T."/>
            <person name="Takeuchi F."/>
            <person name="Kuroda M."/>
            <person name="Yuzawa H."/>
            <person name="Aoki K."/>
            <person name="Oguchi A."/>
            <person name="Nagai Y."/>
            <person name="Iwama N."/>
            <person name="Asano K."/>
            <person name="Naimi T."/>
            <person name="Kuroda H."/>
            <person name="Cui L."/>
            <person name="Yamamoto K."/>
            <person name="Hiramatsu K."/>
        </authorList>
    </citation>
    <scope>NUCLEOTIDE SEQUENCE [LARGE SCALE GENOMIC DNA]</scope>
    <source>
        <strain>MW2</strain>
    </source>
</reference>
<feature type="chain" id="PRO_0000103159" description="4-hydroxy-tetrahydrodipicolinate synthase">
    <location>
        <begin position="1"/>
        <end position="295"/>
    </location>
</feature>
<feature type="active site" description="Proton donor/acceptor" evidence="1">
    <location>
        <position position="135"/>
    </location>
</feature>
<feature type="active site" description="Schiff-base intermediate with substrate" evidence="1">
    <location>
        <position position="163"/>
    </location>
</feature>
<feature type="binding site" evidence="1">
    <location>
        <position position="47"/>
    </location>
    <ligand>
        <name>pyruvate</name>
        <dbReference type="ChEBI" id="CHEBI:15361"/>
    </ligand>
</feature>
<feature type="binding site" evidence="1">
    <location>
        <position position="206"/>
    </location>
    <ligand>
        <name>pyruvate</name>
        <dbReference type="ChEBI" id="CHEBI:15361"/>
    </ligand>
</feature>
<feature type="site" description="Part of a proton relay during catalysis" evidence="1">
    <location>
        <position position="46"/>
    </location>
</feature>
<feature type="site" description="Part of a proton relay during catalysis" evidence="1">
    <location>
        <position position="109"/>
    </location>
</feature>
<gene>
    <name evidence="1" type="primary">dapA</name>
    <name type="ordered locus">MW1283</name>
</gene>
<proteinExistence type="inferred from homology"/>
<name>DAPA_STAAW</name>
<keyword id="KW-0028">Amino-acid biosynthesis</keyword>
<keyword id="KW-0963">Cytoplasm</keyword>
<keyword id="KW-0220">Diaminopimelate biosynthesis</keyword>
<keyword id="KW-0456">Lyase</keyword>
<keyword id="KW-0457">Lysine biosynthesis</keyword>
<keyword id="KW-0704">Schiff base</keyword>
<sequence>MTHLFEGVGVALTTPFTNNKINIEALKTHVNFLLENNAQAIIVNGTTAESPTLTTDEKERILKTVIDLVDKRVPVIAGTGTNDTEKSIQASIQAKALGADAIMLITPYYNKTNQRGLVKHFEAIADAVKLPVVLYNVPSRTNMTIEPETVEILSQHPYIVALKDATNDFEYLEEVKKRIDTNSFALYSGNDDNVVEYYQRGGQGVISVIANVIPKEFQALYDAQQSGLDIQDQFKPIGTLLSALSVDINPIPIKALTSYLGFGNYELRLPLVSLEDTDTKVLREAYDTFKAGENE</sequence>
<dbReference type="EC" id="4.3.3.7" evidence="1"/>
<dbReference type="EMBL" id="BA000033">
    <property type="protein sequence ID" value="BAB95148.1"/>
    <property type="molecule type" value="Genomic_DNA"/>
</dbReference>
<dbReference type="RefSeq" id="WP_000149256.1">
    <property type="nucleotide sequence ID" value="NC_003923.1"/>
</dbReference>
<dbReference type="SMR" id="Q8NWS5"/>
<dbReference type="KEGG" id="sam:MW1283"/>
<dbReference type="HOGENOM" id="CLU_049343_7_0_9"/>
<dbReference type="UniPathway" id="UPA00034">
    <property type="reaction ID" value="UER00017"/>
</dbReference>
<dbReference type="GO" id="GO:0005829">
    <property type="term" value="C:cytosol"/>
    <property type="evidence" value="ECO:0007669"/>
    <property type="project" value="TreeGrafter"/>
</dbReference>
<dbReference type="GO" id="GO:0008840">
    <property type="term" value="F:4-hydroxy-tetrahydrodipicolinate synthase activity"/>
    <property type="evidence" value="ECO:0007669"/>
    <property type="project" value="UniProtKB-UniRule"/>
</dbReference>
<dbReference type="GO" id="GO:0019877">
    <property type="term" value="P:diaminopimelate biosynthetic process"/>
    <property type="evidence" value="ECO:0007669"/>
    <property type="project" value="UniProtKB-UniRule"/>
</dbReference>
<dbReference type="GO" id="GO:0009089">
    <property type="term" value="P:lysine biosynthetic process via diaminopimelate"/>
    <property type="evidence" value="ECO:0007669"/>
    <property type="project" value="UniProtKB-UniRule"/>
</dbReference>
<dbReference type="CDD" id="cd00950">
    <property type="entry name" value="DHDPS"/>
    <property type="match status" value="1"/>
</dbReference>
<dbReference type="Gene3D" id="3.20.20.70">
    <property type="entry name" value="Aldolase class I"/>
    <property type="match status" value="1"/>
</dbReference>
<dbReference type="HAMAP" id="MF_00418">
    <property type="entry name" value="DapA"/>
    <property type="match status" value="1"/>
</dbReference>
<dbReference type="InterPro" id="IPR013785">
    <property type="entry name" value="Aldolase_TIM"/>
</dbReference>
<dbReference type="InterPro" id="IPR005263">
    <property type="entry name" value="DapA"/>
</dbReference>
<dbReference type="InterPro" id="IPR002220">
    <property type="entry name" value="DapA-like"/>
</dbReference>
<dbReference type="InterPro" id="IPR020625">
    <property type="entry name" value="Schiff_base-form_aldolases_AS"/>
</dbReference>
<dbReference type="NCBIfam" id="TIGR00674">
    <property type="entry name" value="dapA"/>
    <property type="match status" value="1"/>
</dbReference>
<dbReference type="PANTHER" id="PTHR12128:SF66">
    <property type="entry name" value="4-HYDROXY-2-OXOGLUTARATE ALDOLASE, MITOCHONDRIAL"/>
    <property type="match status" value="1"/>
</dbReference>
<dbReference type="PANTHER" id="PTHR12128">
    <property type="entry name" value="DIHYDRODIPICOLINATE SYNTHASE"/>
    <property type="match status" value="1"/>
</dbReference>
<dbReference type="Pfam" id="PF00701">
    <property type="entry name" value="DHDPS"/>
    <property type="match status" value="1"/>
</dbReference>
<dbReference type="PIRSF" id="PIRSF001365">
    <property type="entry name" value="DHDPS"/>
    <property type="match status" value="1"/>
</dbReference>
<dbReference type="PRINTS" id="PR00146">
    <property type="entry name" value="DHPICSNTHASE"/>
</dbReference>
<dbReference type="SMART" id="SM01130">
    <property type="entry name" value="DHDPS"/>
    <property type="match status" value="1"/>
</dbReference>
<dbReference type="SUPFAM" id="SSF51569">
    <property type="entry name" value="Aldolase"/>
    <property type="match status" value="1"/>
</dbReference>
<dbReference type="PROSITE" id="PS00666">
    <property type="entry name" value="DHDPS_2"/>
    <property type="match status" value="1"/>
</dbReference>
<accession>Q8NWS5</accession>
<evidence type="ECO:0000255" key="1">
    <source>
        <dbReference type="HAMAP-Rule" id="MF_00418"/>
    </source>
</evidence>
<evidence type="ECO:0000305" key="2"/>
<organism>
    <name type="scientific">Staphylococcus aureus (strain MW2)</name>
    <dbReference type="NCBI Taxonomy" id="196620"/>
    <lineage>
        <taxon>Bacteria</taxon>
        <taxon>Bacillati</taxon>
        <taxon>Bacillota</taxon>
        <taxon>Bacilli</taxon>
        <taxon>Bacillales</taxon>
        <taxon>Staphylococcaceae</taxon>
        <taxon>Staphylococcus</taxon>
    </lineage>
</organism>
<comment type="function">
    <text evidence="1">Catalyzes the condensation of (S)-aspartate-beta-semialdehyde [(S)-ASA] and pyruvate to 4-hydroxy-tetrahydrodipicolinate (HTPA).</text>
</comment>
<comment type="catalytic activity">
    <reaction evidence="1">
        <text>L-aspartate 4-semialdehyde + pyruvate = (2S,4S)-4-hydroxy-2,3,4,5-tetrahydrodipicolinate + H2O + H(+)</text>
        <dbReference type="Rhea" id="RHEA:34171"/>
        <dbReference type="ChEBI" id="CHEBI:15361"/>
        <dbReference type="ChEBI" id="CHEBI:15377"/>
        <dbReference type="ChEBI" id="CHEBI:15378"/>
        <dbReference type="ChEBI" id="CHEBI:67139"/>
        <dbReference type="ChEBI" id="CHEBI:537519"/>
        <dbReference type="EC" id="4.3.3.7"/>
    </reaction>
</comment>
<comment type="pathway">
    <text evidence="1">Amino-acid biosynthesis; L-lysine biosynthesis via DAP pathway; (S)-tetrahydrodipicolinate from L-aspartate: step 3/4.</text>
</comment>
<comment type="subunit">
    <text evidence="1">Homodimer.</text>
</comment>
<comment type="subcellular location">
    <subcellularLocation>
        <location evidence="1">Cytoplasm</location>
    </subcellularLocation>
</comment>
<comment type="similarity">
    <text evidence="1">Belongs to the DapA family.</text>
</comment>
<comment type="caution">
    <text evidence="2">Was originally thought to be a dihydrodipicolinate synthase (DHDPS), catalyzing the condensation of (S)-aspartate-beta-semialdehyde [(S)-ASA] and pyruvate to dihydrodipicolinate (DHDP). However, it was shown in E.coli that the product of the enzymatic reaction is not dihydrodipicolinate but in fact (4S)-4-hydroxy-2,3,4,5-tetrahydro-(2S)-dipicolinic acid (HTPA), and that the consecutive dehydration reaction leading to DHDP is not spontaneous but catalyzed by DapB.</text>
</comment>